<proteinExistence type="inferred from homology"/>
<evidence type="ECO:0000255" key="1">
    <source>
        <dbReference type="HAMAP-Rule" id="MF_00040"/>
    </source>
</evidence>
<evidence type="ECO:0000256" key="2">
    <source>
        <dbReference type="SAM" id="MobiDB-lite"/>
    </source>
</evidence>
<gene>
    <name evidence="1" type="primary">frr</name>
    <name type="ordered locus">SaurJH9_1319</name>
</gene>
<accession>A5ISE3</accession>
<reference key="1">
    <citation type="submission" date="2007-05" db="EMBL/GenBank/DDBJ databases">
        <title>Complete sequence of chromosome of Staphylococcus aureus subsp. aureus JH9.</title>
        <authorList>
            <consortium name="US DOE Joint Genome Institute"/>
            <person name="Copeland A."/>
            <person name="Lucas S."/>
            <person name="Lapidus A."/>
            <person name="Barry K."/>
            <person name="Detter J.C."/>
            <person name="Glavina del Rio T."/>
            <person name="Hammon N."/>
            <person name="Israni S."/>
            <person name="Pitluck S."/>
            <person name="Chain P."/>
            <person name="Malfatti S."/>
            <person name="Shin M."/>
            <person name="Vergez L."/>
            <person name="Schmutz J."/>
            <person name="Larimer F."/>
            <person name="Land M."/>
            <person name="Hauser L."/>
            <person name="Kyrpides N."/>
            <person name="Kim E."/>
            <person name="Tomasz A."/>
            <person name="Richardson P."/>
        </authorList>
    </citation>
    <scope>NUCLEOTIDE SEQUENCE [LARGE SCALE GENOMIC DNA]</scope>
    <source>
        <strain>JH9</strain>
    </source>
</reference>
<feature type="chain" id="PRO_1000074606" description="Ribosome-recycling factor">
    <location>
        <begin position="1"/>
        <end position="184"/>
    </location>
</feature>
<feature type="region of interest" description="Disordered" evidence="2">
    <location>
        <begin position="134"/>
        <end position="167"/>
    </location>
</feature>
<comment type="function">
    <text evidence="1">Responsible for the release of ribosomes from messenger RNA at the termination of protein biosynthesis. May increase the efficiency of translation by recycling ribosomes from one round of translation to another.</text>
</comment>
<comment type="subcellular location">
    <subcellularLocation>
        <location evidence="1">Cytoplasm</location>
    </subcellularLocation>
</comment>
<comment type="similarity">
    <text evidence="1">Belongs to the RRF family.</text>
</comment>
<dbReference type="EMBL" id="CP000703">
    <property type="protein sequence ID" value="ABQ49116.1"/>
    <property type="molecule type" value="Genomic_DNA"/>
</dbReference>
<dbReference type="RefSeq" id="WP_001280006.1">
    <property type="nucleotide sequence ID" value="NC_009487.1"/>
</dbReference>
<dbReference type="SMR" id="A5ISE3"/>
<dbReference type="KEGG" id="saj:SaurJH9_1319"/>
<dbReference type="HOGENOM" id="CLU_073981_2_0_9"/>
<dbReference type="GO" id="GO:0005737">
    <property type="term" value="C:cytoplasm"/>
    <property type="evidence" value="ECO:0007669"/>
    <property type="project" value="UniProtKB-SubCell"/>
</dbReference>
<dbReference type="GO" id="GO:0043023">
    <property type="term" value="F:ribosomal large subunit binding"/>
    <property type="evidence" value="ECO:0007669"/>
    <property type="project" value="TreeGrafter"/>
</dbReference>
<dbReference type="GO" id="GO:0006415">
    <property type="term" value="P:translational termination"/>
    <property type="evidence" value="ECO:0007669"/>
    <property type="project" value="UniProtKB-UniRule"/>
</dbReference>
<dbReference type="CDD" id="cd00520">
    <property type="entry name" value="RRF"/>
    <property type="match status" value="1"/>
</dbReference>
<dbReference type="FunFam" id="1.10.132.20:FF:000001">
    <property type="entry name" value="Ribosome-recycling factor"/>
    <property type="match status" value="1"/>
</dbReference>
<dbReference type="FunFam" id="3.30.1360.40:FF:000001">
    <property type="entry name" value="Ribosome-recycling factor"/>
    <property type="match status" value="1"/>
</dbReference>
<dbReference type="Gene3D" id="3.30.1360.40">
    <property type="match status" value="1"/>
</dbReference>
<dbReference type="Gene3D" id="1.10.132.20">
    <property type="entry name" value="Ribosome-recycling factor"/>
    <property type="match status" value="1"/>
</dbReference>
<dbReference type="HAMAP" id="MF_00040">
    <property type="entry name" value="RRF"/>
    <property type="match status" value="1"/>
</dbReference>
<dbReference type="InterPro" id="IPR002661">
    <property type="entry name" value="Ribosome_recyc_fac"/>
</dbReference>
<dbReference type="InterPro" id="IPR023584">
    <property type="entry name" value="Ribosome_recyc_fac_dom"/>
</dbReference>
<dbReference type="InterPro" id="IPR036191">
    <property type="entry name" value="RRF_sf"/>
</dbReference>
<dbReference type="NCBIfam" id="TIGR00496">
    <property type="entry name" value="frr"/>
    <property type="match status" value="1"/>
</dbReference>
<dbReference type="PANTHER" id="PTHR20982:SF3">
    <property type="entry name" value="MITOCHONDRIAL RIBOSOME RECYCLING FACTOR PSEUDO 1"/>
    <property type="match status" value="1"/>
</dbReference>
<dbReference type="PANTHER" id="PTHR20982">
    <property type="entry name" value="RIBOSOME RECYCLING FACTOR"/>
    <property type="match status" value="1"/>
</dbReference>
<dbReference type="Pfam" id="PF01765">
    <property type="entry name" value="RRF"/>
    <property type="match status" value="1"/>
</dbReference>
<dbReference type="SUPFAM" id="SSF55194">
    <property type="entry name" value="Ribosome recycling factor, RRF"/>
    <property type="match status" value="1"/>
</dbReference>
<protein>
    <recommendedName>
        <fullName evidence="1">Ribosome-recycling factor</fullName>
        <shortName evidence="1">RRF</shortName>
    </recommendedName>
    <alternativeName>
        <fullName evidence="1">Ribosome-releasing factor</fullName>
    </alternativeName>
</protein>
<organism>
    <name type="scientific">Staphylococcus aureus (strain JH9)</name>
    <dbReference type="NCBI Taxonomy" id="359786"/>
    <lineage>
        <taxon>Bacteria</taxon>
        <taxon>Bacillati</taxon>
        <taxon>Bacillota</taxon>
        <taxon>Bacilli</taxon>
        <taxon>Bacillales</taxon>
        <taxon>Staphylococcaceae</taxon>
        <taxon>Staphylococcus</taxon>
    </lineage>
</organism>
<sequence length="184" mass="20353">MSDIINETKSRMQKSIESLSRELANISAGRANSNLLNGVTVDYYGAPTPVQQLASINVPEARLLVISPYDKTSVADIEKAIIAANLGVNPTSDGEVIRIAVPALTEERRKERVKDVKKIGEEAKVSVRNIRRDMNDQLKKDEKNGDITEDELRSGTEDVQKATDNSIKEIDQMIADKEKDIMSV</sequence>
<name>RRF_STAA9</name>
<keyword id="KW-0963">Cytoplasm</keyword>
<keyword id="KW-0648">Protein biosynthesis</keyword>